<sequence length="240" mass="25135">MARRPRRSDSSSAEPTLSPQHLLALVRSTIPPIHPAGRPFIAAGLAVAGVGYRHRWARRTGLLAAGACAGFFRHPPRVPPSRAGAIVAPADGVICVIDTAAPPAELSMGDAPLPRVSIFLSVFDAHVQRAPVSGEVVAVQHRPGRFGSADLPAASNDNERNSVRIRTANGAEVVAVQVAGLVARRIVCDAHVGDKLAIGDTYGLIRFGSRLDTYLPPGTEPVVIVGQRTIAGETILADLP</sequence>
<organism>
    <name type="scientific">Mycobacterium ulcerans (strain Agy99)</name>
    <dbReference type="NCBI Taxonomy" id="362242"/>
    <lineage>
        <taxon>Bacteria</taxon>
        <taxon>Bacillati</taxon>
        <taxon>Actinomycetota</taxon>
        <taxon>Actinomycetes</taxon>
        <taxon>Mycobacteriales</taxon>
        <taxon>Mycobacteriaceae</taxon>
        <taxon>Mycobacterium</taxon>
        <taxon>Mycobacterium ulcerans group</taxon>
    </lineage>
</organism>
<proteinExistence type="inferred from homology"/>
<evidence type="ECO:0000255" key="1">
    <source>
        <dbReference type="HAMAP-Rule" id="MF_00664"/>
    </source>
</evidence>
<keyword id="KW-1003">Cell membrane</keyword>
<keyword id="KW-0210">Decarboxylase</keyword>
<keyword id="KW-0444">Lipid biosynthesis</keyword>
<keyword id="KW-0443">Lipid metabolism</keyword>
<keyword id="KW-0456">Lyase</keyword>
<keyword id="KW-0472">Membrane</keyword>
<keyword id="KW-0594">Phospholipid biosynthesis</keyword>
<keyword id="KW-1208">Phospholipid metabolism</keyword>
<keyword id="KW-0670">Pyruvate</keyword>
<keyword id="KW-0865">Zymogen</keyword>
<feature type="chain" id="PRO_1000026662" description="Phosphatidylserine decarboxylase beta chain" evidence="1">
    <location>
        <begin position="1"/>
        <end position="208"/>
    </location>
</feature>
<feature type="chain" id="PRO_1000026663" description="Phosphatidylserine decarboxylase alpha chain" evidence="1">
    <location>
        <begin position="209"/>
        <end position="240"/>
    </location>
</feature>
<feature type="active site" description="Schiff-base intermediate with substrate; via pyruvic acid" evidence="1">
    <location>
        <position position="209"/>
    </location>
</feature>
<feature type="site" description="Cleavage (non-hydrolytic); by autocatalysis" evidence="1">
    <location>
        <begin position="208"/>
        <end position="209"/>
    </location>
</feature>
<feature type="modified residue" description="Pyruvic acid (Ser); by autocatalysis" evidence="1">
    <location>
        <position position="209"/>
    </location>
</feature>
<reference key="1">
    <citation type="journal article" date="2007" name="Genome Res.">
        <title>Reductive evolution and niche adaptation inferred from the genome of Mycobacterium ulcerans, the causative agent of Buruli ulcer.</title>
        <authorList>
            <person name="Stinear T.P."/>
            <person name="Seemann T."/>
            <person name="Pidot S."/>
            <person name="Frigui W."/>
            <person name="Reysset G."/>
            <person name="Garnier T."/>
            <person name="Meurice G."/>
            <person name="Simon D."/>
            <person name="Bouchier C."/>
            <person name="Ma L."/>
            <person name="Tichit M."/>
            <person name="Porter J.L."/>
            <person name="Ryan J."/>
            <person name="Johnson P.D.R."/>
            <person name="Davies J.K."/>
            <person name="Jenkin G.A."/>
            <person name="Small P.L.C."/>
            <person name="Jones L.M."/>
            <person name="Tekaia F."/>
            <person name="Laval F."/>
            <person name="Daffe M."/>
            <person name="Parkhill J."/>
            <person name="Cole S.T."/>
        </authorList>
    </citation>
    <scope>NUCLEOTIDE SEQUENCE [LARGE SCALE GENOMIC DNA]</scope>
    <source>
        <strain>Agy99</strain>
    </source>
</reference>
<accession>A0PNL2</accession>
<gene>
    <name evidence="1" type="primary">psd</name>
    <name type="ordered locus">MUL_1386</name>
</gene>
<protein>
    <recommendedName>
        <fullName evidence="1">Phosphatidylserine decarboxylase proenzyme</fullName>
        <ecNumber evidence="1">4.1.1.65</ecNumber>
    </recommendedName>
    <component>
        <recommendedName>
            <fullName evidence="1">Phosphatidylserine decarboxylase alpha chain</fullName>
        </recommendedName>
    </component>
    <component>
        <recommendedName>
            <fullName evidence="1">Phosphatidylserine decarboxylase beta chain</fullName>
        </recommendedName>
    </component>
</protein>
<name>PSD_MYCUA</name>
<comment type="function">
    <text evidence="1">Catalyzes the formation of phosphatidylethanolamine (PtdEtn) from phosphatidylserine (PtdSer).</text>
</comment>
<comment type="catalytic activity">
    <reaction evidence="1">
        <text>a 1,2-diacyl-sn-glycero-3-phospho-L-serine + H(+) = a 1,2-diacyl-sn-glycero-3-phosphoethanolamine + CO2</text>
        <dbReference type="Rhea" id="RHEA:20828"/>
        <dbReference type="ChEBI" id="CHEBI:15378"/>
        <dbReference type="ChEBI" id="CHEBI:16526"/>
        <dbReference type="ChEBI" id="CHEBI:57262"/>
        <dbReference type="ChEBI" id="CHEBI:64612"/>
        <dbReference type="EC" id="4.1.1.65"/>
    </reaction>
</comment>
<comment type="cofactor">
    <cofactor evidence="1">
        <name>pyruvate</name>
        <dbReference type="ChEBI" id="CHEBI:15361"/>
    </cofactor>
    <text evidence="1">Binds 1 pyruvoyl group covalently per subunit.</text>
</comment>
<comment type="pathway">
    <text evidence="1">Phospholipid metabolism; phosphatidylethanolamine biosynthesis; phosphatidylethanolamine from CDP-diacylglycerol: step 2/2.</text>
</comment>
<comment type="subunit">
    <text evidence="1">Heterodimer of a large membrane-associated beta subunit and a small pyruvoyl-containing alpha subunit.</text>
</comment>
<comment type="subcellular location">
    <subcellularLocation>
        <location evidence="1">Cell membrane</location>
        <topology evidence="1">Peripheral membrane protein</topology>
    </subcellularLocation>
</comment>
<comment type="PTM">
    <text evidence="1">Is synthesized initially as an inactive proenzyme. Formation of the active enzyme involves a self-maturation process in which the active site pyruvoyl group is generated from an internal serine residue via an autocatalytic post-translational modification. Two non-identical subunits are generated from the proenzyme in this reaction, and the pyruvate is formed at the N-terminus of the alpha chain, which is derived from the carboxyl end of the proenzyme. The post-translation cleavage follows an unusual pathway, termed non-hydrolytic serinolysis, in which the side chain hydroxyl group of the serine supplies its oxygen atom to form the C-terminus of the beta chain, while the remainder of the serine residue undergoes an oxidative deamination to produce ammonia and the pyruvoyl prosthetic group on the alpha chain.</text>
</comment>
<comment type="similarity">
    <text evidence="1">Belongs to the phosphatidylserine decarboxylase family. PSD-A subfamily.</text>
</comment>
<dbReference type="EC" id="4.1.1.65" evidence="1"/>
<dbReference type="EMBL" id="CP000325">
    <property type="protein sequence ID" value="ABL03931.1"/>
    <property type="molecule type" value="Genomic_DNA"/>
</dbReference>
<dbReference type="RefSeq" id="WP_011739552.1">
    <property type="nucleotide sequence ID" value="NC_008611.1"/>
</dbReference>
<dbReference type="KEGG" id="mul:MUL_1386"/>
<dbReference type="eggNOG" id="COG0688">
    <property type="taxonomic scope" value="Bacteria"/>
</dbReference>
<dbReference type="HOGENOM" id="CLU_072492_0_0_11"/>
<dbReference type="UniPathway" id="UPA00558">
    <property type="reaction ID" value="UER00616"/>
</dbReference>
<dbReference type="Proteomes" id="UP000000765">
    <property type="component" value="Chromosome"/>
</dbReference>
<dbReference type="GO" id="GO:0005886">
    <property type="term" value="C:plasma membrane"/>
    <property type="evidence" value="ECO:0007669"/>
    <property type="project" value="UniProtKB-SubCell"/>
</dbReference>
<dbReference type="GO" id="GO:0004609">
    <property type="term" value="F:phosphatidylserine decarboxylase activity"/>
    <property type="evidence" value="ECO:0007669"/>
    <property type="project" value="UniProtKB-UniRule"/>
</dbReference>
<dbReference type="GO" id="GO:0006646">
    <property type="term" value="P:phosphatidylethanolamine biosynthetic process"/>
    <property type="evidence" value="ECO:0007669"/>
    <property type="project" value="UniProtKB-UniRule"/>
</dbReference>
<dbReference type="HAMAP" id="MF_00664">
    <property type="entry name" value="PS_decarb_PSD_A"/>
    <property type="match status" value="1"/>
</dbReference>
<dbReference type="InterPro" id="IPR003817">
    <property type="entry name" value="PS_Dcarbxylase"/>
</dbReference>
<dbReference type="InterPro" id="IPR033175">
    <property type="entry name" value="PSD-A"/>
</dbReference>
<dbReference type="NCBIfam" id="NF003679">
    <property type="entry name" value="PRK05305.1-3"/>
    <property type="match status" value="1"/>
</dbReference>
<dbReference type="PANTHER" id="PTHR35809">
    <property type="entry name" value="ARCHAETIDYLSERINE DECARBOXYLASE PROENZYME-RELATED"/>
    <property type="match status" value="1"/>
</dbReference>
<dbReference type="PANTHER" id="PTHR35809:SF1">
    <property type="entry name" value="ARCHAETIDYLSERINE DECARBOXYLASE PROENZYME-RELATED"/>
    <property type="match status" value="1"/>
</dbReference>
<dbReference type="Pfam" id="PF02666">
    <property type="entry name" value="PS_Dcarbxylase"/>
    <property type="match status" value="1"/>
</dbReference>